<geneLocation type="chloroplast"/>
<feature type="chain" id="PRO_0000276257" description="Photosystem II reaction center protein M">
    <location>
        <begin position="1"/>
        <end position="34"/>
    </location>
</feature>
<feature type="transmembrane region" description="Helical" evidence="1">
    <location>
        <begin position="5"/>
        <end position="25"/>
    </location>
</feature>
<comment type="function">
    <text evidence="1">One of the components of the core complex of photosystem II (PSII). PSII is a light-driven water:plastoquinone oxidoreductase that uses light energy to abstract electrons from H(2)O, generating O(2) and a proton gradient subsequently used for ATP formation. It consists of a core antenna complex that captures photons, and an electron transfer chain that converts photonic excitation into a charge separation. This subunit is found at the monomer-monomer interface.</text>
</comment>
<comment type="subunit">
    <text evidence="1">PSII is composed of 1 copy each of membrane proteins PsbA, PsbB, PsbC, PsbD, PsbE, PsbF, PsbH, PsbI, PsbJ, PsbK, PsbL, PsbM, PsbT, PsbX, PsbY, PsbZ, Psb30/Ycf12, at least 3 peripheral proteins of the oxygen-evolving complex and a large number of cofactors. It forms dimeric complexes.</text>
</comment>
<comment type="subcellular location">
    <subcellularLocation>
        <location evidence="1">Plastid</location>
        <location evidence="1">Chloroplast thylakoid membrane</location>
        <topology evidence="1">Single-pass membrane protein</topology>
    </subcellularLocation>
</comment>
<comment type="similarity">
    <text evidence="1">Belongs to the PsbM family.</text>
</comment>
<reference key="1">
    <citation type="journal article" date="2006" name="Plant Cell Rep.">
        <title>The complete chloroplast genome sequences of Solanum tuberosum and comparative analysis with Solanaceae species identified the presence of a 241-bp deletion in cultivated potato chloroplast DNA sequence.</title>
        <authorList>
            <person name="Chung H.-J."/>
            <person name="Jung J.D."/>
            <person name="Park H.-W."/>
            <person name="Kim J.-H."/>
            <person name="Cha H.W."/>
            <person name="Min S.R."/>
            <person name="Jeong W.-J."/>
            <person name="Liu J.R."/>
        </authorList>
    </citation>
    <scope>NUCLEOTIDE SEQUENCE [LARGE SCALE GENOMIC DNA]</scope>
    <source>
        <strain>cv. Desiree</strain>
    </source>
</reference>
<reference key="2">
    <citation type="submission" date="2006-02" db="EMBL/GenBank/DDBJ databases">
        <title>Complete chloroplast genome sequences of Solanum tuberosum cultivar Desiree and comparative analyses with other Solanaceae genomes.</title>
        <authorList>
            <person name="Gargano D."/>
            <person name="Scotti N."/>
            <person name="Vezzi A."/>
            <person name="Bilardi A."/>
            <person name="Valle G."/>
            <person name="Grillo S."/>
            <person name="Cardi T."/>
        </authorList>
    </citation>
    <scope>NUCLEOTIDE SEQUENCE [LARGE SCALE GENOMIC DNA]</scope>
    <source>
        <strain>cv. Desiree</strain>
    </source>
</reference>
<evidence type="ECO:0000255" key="1">
    <source>
        <dbReference type="HAMAP-Rule" id="MF_00438"/>
    </source>
</evidence>
<gene>
    <name evidence="1" type="primary">psbM</name>
</gene>
<accession>Q2VEI2</accession>
<dbReference type="EMBL" id="DQ231562">
    <property type="protein sequence ID" value="ABB90037.1"/>
    <property type="molecule type" value="Genomic_DNA"/>
</dbReference>
<dbReference type="EMBL" id="DQ386163">
    <property type="protein sequence ID" value="ABD47051.1"/>
    <property type="molecule type" value="Genomic_DNA"/>
</dbReference>
<dbReference type="RefSeq" id="YP_635633.1">
    <property type="nucleotide sequence ID" value="NC_008096.2"/>
</dbReference>
<dbReference type="SMR" id="Q2VEI2"/>
<dbReference type="FunCoup" id="Q2VEI2">
    <property type="interactions" value="47"/>
</dbReference>
<dbReference type="STRING" id="4113.Q2VEI2"/>
<dbReference type="GeneID" id="4099956"/>
<dbReference type="KEGG" id="sot:4099956"/>
<dbReference type="InParanoid" id="Q2VEI2"/>
<dbReference type="OrthoDB" id="564131at2759"/>
<dbReference type="Proteomes" id="UP000011115">
    <property type="component" value="Unassembled WGS sequence"/>
</dbReference>
<dbReference type="GO" id="GO:0009535">
    <property type="term" value="C:chloroplast thylakoid membrane"/>
    <property type="evidence" value="ECO:0007669"/>
    <property type="project" value="UniProtKB-SubCell"/>
</dbReference>
<dbReference type="GO" id="GO:0009523">
    <property type="term" value="C:photosystem II"/>
    <property type="evidence" value="ECO:0007669"/>
    <property type="project" value="UniProtKB-KW"/>
</dbReference>
<dbReference type="GO" id="GO:0019684">
    <property type="term" value="P:photosynthesis, light reaction"/>
    <property type="evidence" value="ECO:0007669"/>
    <property type="project" value="InterPro"/>
</dbReference>
<dbReference type="HAMAP" id="MF_00438">
    <property type="entry name" value="PSII_PsbM"/>
    <property type="match status" value="1"/>
</dbReference>
<dbReference type="InterPro" id="IPR007826">
    <property type="entry name" value="PSII_PsbM"/>
</dbReference>
<dbReference type="InterPro" id="IPR037269">
    <property type="entry name" value="PSII_PsbM_sf"/>
</dbReference>
<dbReference type="NCBIfam" id="TIGR03038">
    <property type="entry name" value="PS_II_psbM"/>
    <property type="match status" value="1"/>
</dbReference>
<dbReference type="PANTHER" id="PTHR35774">
    <property type="entry name" value="PHOTOSYSTEM II REACTION CENTER PROTEIN M"/>
    <property type="match status" value="1"/>
</dbReference>
<dbReference type="PANTHER" id="PTHR35774:SF1">
    <property type="entry name" value="PHOTOSYSTEM II REACTION CENTER PROTEIN M"/>
    <property type="match status" value="1"/>
</dbReference>
<dbReference type="Pfam" id="PF05151">
    <property type="entry name" value="PsbM"/>
    <property type="match status" value="1"/>
</dbReference>
<dbReference type="SUPFAM" id="SSF161033">
    <property type="entry name" value="Photosystem II reaction center protein M, PsbM"/>
    <property type="match status" value="1"/>
</dbReference>
<keyword id="KW-0150">Chloroplast</keyword>
<keyword id="KW-0472">Membrane</keyword>
<keyword id="KW-0602">Photosynthesis</keyword>
<keyword id="KW-0604">Photosystem II</keyword>
<keyword id="KW-0934">Plastid</keyword>
<keyword id="KW-0674">Reaction center</keyword>
<keyword id="KW-1185">Reference proteome</keyword>
<keyword id="KW-0793">Thylakoid</keyword>
<keyword id="KW-0812">Transmembrane</keyword>
<keyword id="KW-1133">Transmembrane helix</keyword>
<name>PSBM_SOLTU</name>
<protein>
    <recommendedName>
        <fullName evidence="1">Photosystem II reaction center protein M</fullName>
        <shortName evidence="1">PSII-M</shortName>
    </recommendedName>
</protein>
<organism>
    <name type="scientific">Solanum tuberosum</name>
    <name type="common">Potato</name>
    <dbReference type="NCBI Taxonomy" id="4113"/>
    <lineage>
        <taxon>Eukaryota</taxon>
        <taxon>Viridiplantae</taxon>
        <taxon>Streptophyta</taxon>
        <taxon>Embryophyta</taxon>
        <taxon>Tracheophyta</taxon>
        <taxon>Spermatophyta</taxon>
        <taxon>Magnoliopsida</taxon>
        <taxon>eudicotyledons</taxon>
        <taxon>Gunneridae</taxon>
        <taxon>Pentapetalae</taxon>
        <taxon>asterids</taxon>
        <taxon>lamiids</taxon>
        <taxon>Solanales</taxon>
        <taxon>Solanaceae</taxon>
        <taxon>Solanoideae</taxon>
        <taxon>Solaneae</taxon>
        <taxon>Solanum</taxon>
    </lineage>
</organism>
<sequence length="34" mass="3783">MEVNILAFIATALFILVPTAFLLIIYVKTVSQND</sequence>
<proteinExistence type="inferred from homology"/>